<gene>
    <name type="ORF">BZLF1</name>
</gene>
<reference key="1">
    <citation type="journal article" date="1984" name="Nature">
        <title>DNA sequence and expression of the B95-8 Epstein-Barr virus genome.</title>
        <authorList>
            <person name="Baer R."/>
            <person name="Bankier A.T."/>
            <person name="Biggin M.D."/>
            <person name="Deininger P.L."/>
            <person name="Farrell P.J."/>
            <person name="Gibson T.J."/>
            <person name="Hatfull G."/>
            <person name="Hudson G.S."/>
            <person name="Satchwell S.C."/>
            <person name="Seguin C."/>
            <person name="Tuffnell P.S."/>
            <person name="Barrell B.G."/>
        </authorList>
    </citation>
    <scope>NUCLEOTIDE SEQUENCE [LARGE SCALE GENOMIC DNA]</scope>
</reference>
<reference key="2">
    <citation type="journal article" date="1987" name="J. Virol.">
        <title>Epstein-Barr virus gene expression in P3HR1-superinfected Raji cells.</title>
        <authorList>
            <person name="Biggin M."/>
            <person name="Bodescot M."/>
            <person name="Perricaudet M."/>
            <person name="Farrel P."/>
        </authorList>
    </citation>
    <scope>NUCLEOTIDE SEQUENCE [GENOMIC RNA]</scope>
    <scope>CHARACTERIZATION</scope>
</reference>
<reference key="3">
    <citation type="journal article" date="2003" name="Virology">
        <title>Updated Epstein-Barr virus (EBV) DNA sequence and analysis of a promoter for the BART (CST, BARF0) RNAs of EBV.</title>
        <authorList>
            <person name="de Jesus O."/>
            <person name="Smith P.R."/>
            <person name="Spender L.C."/>
            <person name="Elgueta Karstegl C."/>
            <person name="Niller H.H."/>
            <person name="Huang D."/>
            <person name="Farrell P.J."/>
        </authorList>
    </citation>
    <scope>GENOME REANNOTATION</scope>
</reference>
<reference key="4">
    <citation type="journal article" date="1989" name="EMBO J.">
        <title>Epstein-Barr virus BZLF1 trans-activator specifically binds to a consensus AP-1 site and is related to c-fos.</title>
        <authorList>
            <person name="Farrel P.J."/>
            <person name="Rowe D.T."/>
            <person name="Rooney C.M."/>
            <person name="Kouzarides T."/>
        </authorList>
    </citation>
    <scope>DNA-BINDING</scope>
</reference>
<reference key="5">
    <citation type="journal article" date="1990" name="J. Virol.">
        <title>Structure and function of the Epstein-Barr virus BZLF1 protein.</title>
        <authorList>
            <person name="Packham G."/>
            <person name="Economou A."/>
            <person name="Rooney C.M."/>
            <person name="Rowe D.T."/>
            <person name="Farrel P.J."/>
        </authorList>
    </citation>
    <scope>FUNCTION</scope>
</reference>
<reference key="6">
    <citation type="journal article" date="1991" name="Oncogene">
        <title>The BZLF1 protein of EBV has a coiled coil dimerisation domain without a heptad leucine repeat but with homology to the C/EBP leucine zipper.</title>
        <authorList>
            <person name="Kouzarides T."/>
            <person name="Packham G."/>
            <person name="Cook A."/>
            <person name="Farrell P.J."/>
        </authorList>
    </citation>
    <scope>FUNCTION</scope>
</reference>
<reference key="7">
    <citation type="journal article" date="1993" name="EMBO J.">
        <title>A transcription factor with homology to the AP-1 family links RNA transcription and DNA replication in the lytic cycle of Epstein-Barr virus.</title>
        <authorList>
            <person name="Schepers A."/>
            <person name="Pich D."/>
            <person name="Hammerschmidt W."/>
        </authorList>
    </citation>
    <scope>FUNCTION</scope>
</reference>
<reference key="8">
    <citation type="journal article" date="1993" name="J. Virol.">
        <title>The DNA-binding domain of two bZIP transcription factors, the Epstein-Barr virus switch gene product EB1 and Jun, is a bipartite nuclear targeting sequence.</title>
        <authorList>
            <person name="Mikaelian I."/>
            <person name="Drouet E."/>
            <person name="Marechal V."/>
            <person name="Denoyel G."/>
            <person name="Nicolas J.C."/>
            <person name="Sergeant A."/>
        </authorList>
    </citation>
    <scope>NUCLEAR LOCALIZATION SIGNAL</scope>
    <scope>SUBCELLULAR LOCATION</scope>
</reference>
<reference key="9">
    <citation type="journal article" date="1996" name="J. Virol.">
        <title>Functional and physical interactions between the Epstein-Barr virus (EBV) proteins BZLF1 and BMRF1: Effects on EBV transcription and lytic replication.</title>
        <authorList>
            <person name="Zhang Q."/>
            <person name="Hong Y."/>
            <person name="Dorsky D."/>
            <person name="Holley-Guthrie E."/>
            <person name="Zalani S."/>
            <person name="Elshiekh N.A."/>
            <person name="Kiehl A."/>
            <person name="Le T."/>
            <person name="Kenney S."/>
        </authorList>
    </citation>
    <scope>INTERACTION WITH THE DNA POLYMERASE PROCESSIVITY FACTOR BMRF1</scope>
</reference>
<reference key="10">
    <citation type="journal article" date="1997" name="J. Virol.">
        <title>Alteration of a single serine in the basic domain of the Epstein-Barr virus ZEBRA protein separates its functions of transcriptional activation and disruption of latency.</title>
        <authorList>
            <person name="Francis A.L."/>
            <person name="Gradoville L."/>
            <person name="Miller G."/>
        </authorList>
    </citation>
    <scope>MUTAGENESIS OF SER-186</scope>
</reference>
<reference key="11">
    <citation type="journal article" date="1999" name="J. Virol.">
        <title>Amino acid substitutions reveal distinct functions of serine 186 of the ZEBRA protein in activation of early lytic cycle genes and synergy with the Epstein-Barr virus R transactivator.</title>
        <authorList>
            <person name="Francis A."/>
            <person name="Ragoczy T."/>
            <person name="Gradoville L."/>
            <person name="Heston L."/>
            <person name="El-Guindy A."/>
            <person name="Endo Y."/>
            <person name="Miller G."/>
        </authorList>
    </citation>
    <scope>MUTAGENESIS OF SER-186</scope>
</reference>
<reference key="12">
    <citation type="journal article" date="2000" name="Eur. J. Biochem.">
        <title>The PKC targeting protein RACK1 interacts with the Epstein-Barr virus activator protein BZLF1.</title>
        <authorList>
            <person name="Baumann M."/>
            <person name="Gires O."/>
            <person name="Kolch W."/>
            <person name="Mischak H."/>
            <person name="Zeidler R."/>
            <person name="Pich D."/>
            <person name="Hammerschmidt W."/>
        </authorList>
    </citation>
    <scope>INTERACTION WITH HUMAN RACK1</scope>
    <scope>SUBCELLULAR LOCATION</scope>
</reference>
<reference key="13">
    <citation type="journal article" date="2000" name="J. Cell Biol.">
        <title>Ubinuclein, a novel nuclear protein interacting with cellular and viral transcription factors.</title>
        <authorList>
            <person name="Aho S."/>
            <person name="Buisson M."/>
            <person name="Pajunen T."/>
            <person name="Ryoo Y.W."/>
            <person name="Giot J.-F."/>
            <person name="Gruffat H."/>
            <person name="Sergeant A."/>
            <person name="Uitto J."/>
        </authorList>
    </citation>
    <scope>INTERACTION WITH HUMAN UBN1</scope>
</reference>
<reference key="14">
    <citation type="journal article" date="2000" name="EMBO J.">
        <title>The Epstein-Barr virus lytic program is controlled by the co-operative functions of two transactivators.</title>
        <authorList>
            <person name="Feederle R."/>
            <person name="Kost M."/>
            <person name="Baumann M."/>
            <person name="Janz A."/>
            <person name="Drouet E."/>
            <person name="Hammerschmidt W."/>
            <person name="Delecluse H.J."/>
        </authorList>
    </citation>
    <scope>FUNCTION</scope>
</reference>
<reference key="15">
    <citation type="journal article" date="2001" name="J. Virol.">
        <title>Biophysical analysis of natural variants of the multimerization region of Epstein-Barr virus lytic-switch protein BZLF1.</title>
        <authorList>
            <person name="Hicks M.R."/>
            <person name="Balesaria S."/>
            <person name="Medina-Palazon C."/>
            <person name="Pandya M.J."/>
            <person name="Woolfson D.N."/>
            <person name="Sinclair A.J."/>
        </authorList>
    </citation>
    <scope>SUBUNIT</scope>
    <scope>DOMAIN</scope>
</reference>
<reference key="16">
    <citation type="journal article" date="2004" name="Nat. Genet.">
        <title>The EBV lytic switch protein, Z, preferentially binds to and activates the methylated viral genome.</title>
        <authorList>
            <person name="Bhende P.M."/>
            <person name="Seaman W.T."/>
            <person name="Delecluse H.J."/>
            <person name="Kenney S.C."/>
        </authorList>
    </citation>
    <scope>FUNCTION</scope>
</reference>
<reference key="17">
    <citation type="journal article" date="2004" name="J. Virol.">
        <title>CCAAT/enhancer binding protein alpha binds to the Epstein-Barr virus (EBV) ZTA protein through oligomeric interactions and contributes to cooperative transcriptional activation of the ZTA promoter through direct binding to the ZII and ZIIIB motifs during induction of the EBV lytic cycle.</title>
        <authorList>
            <person name="Wu F.Y."/>
            <person name="Wang S.E."/>
            <person name="Chen H."/>
            <person name="Wang L."/>
            <person name="Hayward S.D."/>
            <person name="Hayward G.S."/>
        </authorList>
    </citation>
    <scope>INTERACTION WITH HOST CEBPA</scope>
    <scope>FUNCTION</scope>
    <scope>SUBUNIT</scope>
    <scope>DOMAIN</scope>
    <scope>MUTAGENESIS OF 178-LYS--TYR-180; ALA-204; ALA-205; ALA-206; LEU-214 AND LEU-218</scope>
</reference>
<reference key="18">
    <citation type="journal article" date="2004" name="J. Virol.">
        <title>Phosphorylation of Epstein-Barr virus ZEBRA protein at its casein kinase 2 sites mediates its ability to repress activation of a viral lytic cycle late gene by Rta.</title>
        <authorList>
            <person name="El-Guindy A.S."/>
            <person name="Miller G."/>
        </authorList>
    </citation>
    <scope>PHOSPHORYLATION AT SER-167 AND SER-173</scope>
</reference>
<reference key="19">
    <citation type="journal article" date="2005" name="J. Virol.">
        <title>BZLF1 activation of the methylated form of the BRLF1 immediate-early promoter is regulated by BZLF1 residue 186.</title>
        <authorList>
            <person name="Bhende P.M."/>
            <person name="Seaman W.T."/>
            <person name="Delecluse H.J."/>
            <person name="Kenney S.C."/>
        </authorList>
    </citation>
    <scope>MUTAGENESIS OF SER-186</scope>
</reference>
<reference key="20">
    <citation type="journal article" date="2006" name="J. Biol. Chem.">
        <title>Identification of constitutive phosphorylation sites on the Epstein-Barr virus ZEBRA protein.</title>
        <authorList>
            <person name="El-Guindy A.S."/>
            <person name="Paek S.Y."/>
            <person name="Countryman J."/>
            <person name="Miller G."/>
        </authorList>
    </citation>
    <scope>PHOSPHORYLATION AT THR-14; THR-159; SER-167; SER-173 AND SER-186</scope>
    <scope>DOMAIN</scope>
</reference>
<reference key="21">
    <citation type="journal article" date="2007" name="J. Virol.">
        <title>Epstein-Barr virus BZLF1 gene, a switch from latency to lytic infection, is expressed as an immediate-early gene after primary infection of B lymphocytes.</title>
        <authorList>
            <person name="Wen W."/>
            <person name="Iwakiri D."/>
            <person name="Yamamoto K."/>
            <person name="Maruo S."/>
            <person name="Kanda T."/>
            <person name="Takada K."/>
        </authorList>
    </citation>
    <scope>FUNCTION</scope>
    <scope>INDUCTION</scope>
</reference>
<reference key="22">
    <citation type="journal article" date="2009" name="J. Biol. Chem.">
        <title>TORC2, a coactivator of cAMP-response element-binding protein, promotes Epstein-Barr virus reactivation from latency through interaction with viral BZLF1 protein.</title>
        <authorList>
            <person name="Murata T."/>
            <person name="Sato Y."/>
            <person name="Nakayama S."/>
            <person name="Kudoh A."/>
            <person name="Iwahori S."/>
            <person name="Isomura H."/>
            <person name="Tajima M."/>
            <person name="Hishiki T."/>
            <person name="Ohshima T."/>
            <person name="Hijikata M."/>
            <person name="Shimotohno K."/>
            <person name="Tsurumi T."/>
        </authorList>
    </citation>
    <scope>INTERACTION WITH HUMAN CRTC2</scope>
</reference>
<reference key="23">
    <citation type="journal article" date="2009" name="J. Virol.">
        <title>Functional interaction between Epstein-Barr virus replication protein Zta and host DNA damage response protein 53BP1.</title>
        <authorList>
            <person name="Bailey S.G."/>
            <person name="Verrall E."/>
            <person name="Schelcher C."/>
            <person name="Rhie A."/>
            <person name="Doherty A.J."/>
            <person name="Sinclair A.J."/>
        </authorList>
    </citation>
    <scope>INTERACTION WITH HOST TP53BP1</scope>
</reference>
<reference key="24">
    <citation type="journal article" date="2009" name="J. Virol.">
        <title>Interaction of Epstein-Barr virus BZLF1 C-terminal tail structure and core zipper is required for DNA replication but not for promoter transactivation.</title>
        <authorList>
            <person name="McDonald C.M."/>
            <person name="Petosa C."/>
            <person name="Farrell P.J."/>
        </authorList>
    </citation>
    <scope>FUNCTION</scope>
</reference>
<reference key="25">
    <citation type="journal article" date="2009" name="PLoS Pathog.">
        <title>Methylation-dependent binding of the Epstein-Barr virus BZLF1 protein to viral promoters.</title>
        <authorList>
            <person name="Dickerson S.J."/>
            <person name="Xing Y."/>
            <person name="Robinson A.R."/>
            <person name="Seaman W.T."/>
            <person name="Gruffat H."/>
            <person name="Kenney S.C."/>
        </authorList>
    </citation>
    <scope>FUNCTION</scope>
    <scope>INDUCTION</scope>
</reference>
<reference key="26">
    <citation type="journal article" date="2010" name="PLoS Pathog.">
        <title>A subset of replication proteins enhances origin recognition and lytic replication by the Epstein-Barr virus ZEBRA protein.</title>
        <authorList>
            <person name="El-Guindy A."/>
            <person name="Heston L."/>
            <person name="Miller G."/>
        </authorList>
    </citation>
    <scope>FUNCTION</scope>
    <scope>MUTAGENESIS OF SER-173; TYR-180; ARG-183; ARG-187 AND LYS-188</scope>
</reference>
<reference key="27">
    <citation type="journal article" date="2011" name="PLoS ONE">
        <title>Epigenetic control of viral life-cycle by a DNA-methylation dependent transcription factor.</title>
        <authorList>
            <person name="Flower K."/>
            <person name="Thomas D."/>
            <person name="Heather J."/>
            <person name="Ramasubramanyan S."/>
            <person name="Jones S."/>
            <person name="Sinclair A.J."/>
        </authorList>
    </citation>
    <scope>INDUCTION</scope>
    <scope>FUNCTION</scope>
</reference>
<reference key="28">
    <citation type="journal article" date="2013" name="J. Virol.">
        <title>The B-cell-specific transcription factor and master regulator Pax5 promotes Epstein-Barr virus latency by negatively regulating the viral immediate early protein BZLF1.</title>
        <authorList>
            <person name="Raver R.M."/>
            <person name="Panfil A.R."/>
            <person name="Hagemeier S.R."/>
            <person name="Kenney S.C."/>
        </authorList>
    </citation>
    <scope>FUNCTION</scope>
    <scope>INTERACTION WITH HUMAN PAX5</scope>
</reference>
<reference key="29">
    <citation type="journal article" date="2019" name="Life. Sci Alliance">
        <title>BZLF1 interacts with chromatin remodelers promoting escape from latent infections with EBV.</title>
        <authorList>
            <person name="Schaeffner M."/>
            <person name="Mrozek-Gorska P."/>
            <person name="Buschle A."/>
            <person name="Woellmer A."/>
            <person name="Tagawa T."/>
            <person name="Cernilogar F.M."/>
            <person name="Schotta G."/>
            <person name="Krietenstein N."/>
            <person name="Lieleg C."/>
            <person name="Korber P."/>
            <person name="Hammerschmidt W."/>
        </authorList>
    </citation>
    <scope>FUNCTION</scope>
    <scope>INTERACTION WITH HOST INO80</scope>
    <scope>INTERACTION WITH HOST SMARCA5</scope>
</reference>
<reference key="30">
    <citation type="journal article" date="2019" name="J. Biol. Chem.">
        <title>Interaction of phospholipid scramblase 1 with the Epstein-Barr virus protein BZLF1 represses BZLF1-mediated lytic gene transcription.</title>
        <authorList>
            <person name="Kusano S."/>
            <person name="Ikeda M."/>
        </authorList>
    </citation>
    <scope>INTERACTION WITH HOST PLSCR1</scope>
</reference>
<reference key="31">
    <citation type="journal article" date="2022" name="Nucleic Acids Res.">
        <title>Structural basis of DNA methylation-dependent site selectivity of the Epstein-Barr virus lytic switch protein ZEBRA/Zta/BZLF1.</title>
        <authorList>
            <person name="Bernaudat F."/>
            <person name="Gustems M."/>
            <person name="Guenther J."/>
            <person name="Oliva M.F."/>
            <person name="Buschle A."/>
            <person name="Goebel C."/>
            <person name="Pagniez P."/>
            <person name="Lupo J."/>
            <person name="Signor L."/>
            <person name="Mueller C.W."/>
            <person name="Morand P."/>
            <person name="Sattler M."/>
            <person name="Hammerschmidt W."/>
            <person name="Petosa C."/>
        </authorList>
    </citation>
    <scope>FUNCTION</scope>
    <scope>DOMAIN</scope>
</reference>
<reference key="32">
    <citation type="journal article" date="2006" name="Mol. Cell">
        <title>Structural basis of lytic cycle activation by the Epstein-Barr virus ZEBRA protein.</title>
        <authorList>
            <person name="Petosa C."/>
            <person name="Morand P."/>
            <person name="Baudin F."/>
            <person name="Moulin M."/>
            <person name="Artero J.B."/>
            <person name="Muller C.W."/>
        </authorList>
    </citation>
    <scope>X-RAY CRYSTALLOGRAPHY (2.25 ANGSTROMS) OF 175-236</scope>
</reference>
<reference evidence="35" key="33">
    <citation type="journal article" date="2017" name="Nucleic Acids Res.">
        <title>Methyl-dependent and spatial-specific DNA recognition by the orthologous transcription factors human AP-1 and Epstein-Barr virus Zta.</title>
        <authorList>
            <person name="Hong S."/>
            <person name="Wang D."/>
            <person name="Horton J.R."/>
            <person name="Zhang X."/>
            <person name="Speck S.H."/>
            <person name="Blumenthal R.M."/>
            <person name="Cheng X."/>
        </authorList>
    </citation>
    <scope>X-RAY CRYSTALLOGRAPHY (2.25 ANGSTROMS) OF 175-236</scope>
    <scope>SUBUNIT</scope>
    <scope>DNA-BINDING</scope>
    <scope>MUTAGENESIS OF SER-186</scope>
</reference>
<evidence type="ECO:0000250" key="1"/>
<evidence type="ECO:0000269" key="2">
    <source>
    </source>
</evidence>
<evidence type="ECO:0000269" key="3">
    <source>
    </source>
</evidence>
<evidence type="ECO:0000269" key="4">
    <source>
    </source>
</evidence>
<evidence type="ECO:0000269" key="5">
    <source>
    </source>
</evidence>
<evidence type="ECO:0000269" key="6">
    <source>
    </source>
</evidence>
<evidence type="ECO:0000269" key="7">
    <source>
    </source>
</evidence>
<evidence type="ECO:0000269" key="8">
    <source>
    </source>
</evidence>
<evidence type="ECO:0000269" key="9">
    <source>
    </source>
</evidence>
<evidence type="ECO:0000269" key="10">
    <source>
    </source>
</evidence>
<evidence type="ECO:0000269" key="11">
    <source>
    </source>
</evidence>
<evidence type="ECO:0000269" key="12">
    <source>
    </source>
</evidence>
<evidence type="ECO:0000269" key="13">
    <source>
    </source>
</evidence>
<evidence type="ECO:0000269" key="14">
    <source>
    </source>
</evidence>
<evidence type="ECO:0000269" key="15">
    <source>
    </source>
</evidence>
<evidence type="ECO:0000269" key="16">
    <source>
    </source>
</evidence>
<evidence type="ECO:0000269" key="17">
    <source>
    </source>
</evidence>
<evidence type="ECO:0000269" key="18">
    <source>
    </source>
</evidence>
<evidence type="ECO:0000269" key="19">
    <source>
    </source>
</evidence>
<evidence type="ECO:0000269" key="20">
    <source>
    </source>
</evidence>
<evidence type="ECO:0000269" key="21">
    <source>
    </source>
</evidence>
<evidence type="ECO:0000269" key="22">
    <source>
    </source>
</evidence>
<evidence type="ECO:0000269" key="23">
    <source>
    </source>
</evidence>
<evidence type="ECO:0000269" key="24">
    <source>
    </source>
</evidence>
<evidence type="ECO:0000269" key="25">
    <source>
    </source>
</evidence>
<evidence type="ECO:0000269" key="26">
    <source>
    </source>
</evidence>
<evidence type="ECO:0000269" key="27">
    <source>
    </source>
</evidence>
<evidence type="ECO:0000269" key="28">
    <source>
    </source>
</evidence>
<evidence type="ECO:0000269" key="29">
    <source>
    </source>
</evidence>
<evidence type="ECO:0000303" key="30">
    <source>
    </source>
</evidence>
<evidence type="ECO:0000303" key="31">
    <source>
    </source>
</evidence>
<evidence type="ECO:0000303" key="32">
    <source>
    </source>
</evidence>
<evidence type="ECO:0000305" key="33"/>
<evidence type="ECO:0000305" key="34">
    <source>
    </source>
</evidence>
<evidence type="ECO:0007744" key="35">
    <source>
        <dbReference type="PDB" id="5SZX"/>
    </source>
</evidence>
<evidence type="ECO:0007829" key="36">
    <source>
        <dbReference type="PDB" id="2AK4"/>
    </source>
</evidence>
<evidence type="ECO:0007829" key="37">
    <source>
        <dbReference type="PDB" id="2C9L"/>
    </source>
</evidence>
<keyword id="KW-0002">3D-structure</keyword>
<keyword id="KW-0238">DNA-binding</keyword>
<keyword id="KW-0244">Early protein</keyword>
<keyword id="KW-1077">G0/G1 host cell cycle checkpoint dysregulation by virus</keyword>
<keyword id="KW-1078">G1/S host cell cycle checkpoint dysregulation by virus</keyword>
<keyword id="KW-1048">Host nucleus</keyword>
<keyword id="KW-0945">Host-virus interaction</keyword>
<keyword id="KW-1090">Inhibition of host innate immune response by virus</keyword>
<keyword id="KW-1093">Inhibition of host IRF7 by virus</keyword>
<keyword id="KW-1113">Inhibition of host RLR pathway by virus</keyword>
<keyword id="KW-1121">Modulation of host cell cycle by virus</keyword>
<keyword id="KW-0597">Phosphoprotein</keyword>
<keyword id="KW-1185">Reference proteome</keyword>
<keyword id="KW-0804">Transcription</keyword>
<keyword id="KW-0805">Transcription regulation</keyword>
<keyword id="KW-0899">Viral immunoevasion</keyword>
<keyword id="KW-1251">Viral latency</keyword>
<keyword id="KW-1272">Viral reactivation from latency</keyword>
<sequence length="245" mass="26860">MMDPNSTSEDVKFTPDPYQVPFVQAFDQATRVYQDLGGPSQAPLPCVLWPVLPEPLPQGQLTAYHVSTAPTGSWFSAPQPAPENAYQAYAAPQLFPVSDITQNQQTNQAGGEAPQPGDNSTVQTAAAVVFACPGANQGQQLADIGVPQPAPVAAPARRTRKPQQPESLEECDSELEIKRYKNRVASRKCRAKFKQLLQHYREVAAAKSSENDRLRLLLKQMCPSLDVDSIIPRTPDVLHEDLLNF</sequence>
<proteinExistence type="evidence at protein level"/>
<feature type="chain" id="PRO_0000076541" description="Lytic switch protein BZLF1">
    <location>
        <begin position="1"/>
        <end position="245"/>
    </location>
</feature>
<feature type="domain" description="bZIP">
    <location>
        <begin position="170"/>
        <end position="228"/>
    </location>
</feature>
<feature type="region of interest" description="Transactivation" evidence="31">
    <location>
        <begin position="1"/>
        <end position="167"/>
    </location>
</feature>
<feature type="region of interest" description="Basic motif" evidence="1">
    <location>
        <begin position="178"/>
        <end position="195"/>
    </location>
</feature>
<feature type="region of interest" description="Leucine-zipper" evidence="1">
    <location>
        <begin position="196"/>
        <end position="228"/>
    </location>
</feature>
<feature type="region of interest" description="Accessory activation domain" evidence="31">
    <location>
        <begin position="229"/>
        <end position="245"/>
    </location>
</feature>
<feature type="short sequence motif" description="Bipartite nuclear localization signal" evidence="26">
    <location>
        <begin position="157"/>
        <end position="194"/>
    </location>
</feature>
<feature type="site" description="Recognition of methylation, required for disruption of latency" evidence="25">
    <location>
        <position position="186"/>
    </location>
</feature>
<feature type="site" description="Recognition of methylation" evidence="25">
    <location>
        <position position="190"/>
    </location>
</feature>
<feature type="modified residue" description="Phosphothreonine; by host" evidence="11">
    <location>
        <position position="14"/>
    </location>
</feature>
<feature type="modified residue" description="Phosphothreonine; by host" evidence="11">
    <location>
        <position position="159"/>
    </location>
</feature>
<feature type="modified residue" description="Phosphoserine; by host" evidence="8 11">
    <location>
        <position position="167"/>
    </location>
</feature>
<feature type="modified residue" description="Phosphoserine; by host" evidence="8 11">
    <location>
        <position position="173"/>
    </location>
</feature>
<feature type="modified residue" description="Phosphoserine; by host" evidence="11">
    <location>
        <position position="186"/>
    </location>
</feature>
<feature type="mutagenesis site" description="Complete loss of lytic replication and expression of late gene expression. Reduced capacity to interact with viral DNA and oriLyt." evidence="18">
    <original>S</original>
    <variation>A</variation>
    <location>
        <position position="173"/>
    </location>
</feature>
<feature type="mutagenesis site" description="No effect on homodimerization. Complete loss of interaction with host CEBPA." evidence="7">
    <original>KRY</original>
    <variation>EEL</variation>
    <location>
        <begin position="178"/>
        <end position="180"/>
    </location>
</feature>
<feature type="mutagenesis site" description="Complete loss of lytic replication and expression of late gene expression. Reduced capacity to interact with viral DNA and oriLyt." evidence="18">
    <original>Y</original>
    <variation>E</variation>
    <location>
        <position position="180"/>
    </location>
</feature>
<feature type="mutagenesis site" description="Reduced capacity to interact with viral DNA and oriLyt." evidence="18">
    <original>R</original>
    <variation>E</variation>
    <location>
        <position position="183"/>
    </location>
</feature>
<feature type="mutagenesis site" description="Complete loss of expression of lytic cycle mRNAs/proteins from the methylated or demethylated form of the viral genome. Loss of binding to BRLF1 promoter. Almost complete loss of induced expression of Rta. Unable to activate BRLF1 expression except if Rta is provided in trans. No effect on synergy with Rta." evidence="2 10 22 29">
    <original>S</original>
    <variation>A</variation>
    <location>
        <position position="186"/>
    </location>
</feature>
<feature type="mutagenesis site" description="Complete loss of induced expression of Rta. Unable to activate BRLF1 or BMRF1 from the viral genome. Impaired synergy with Rta.">
    <original>S</original>
    <variation>C</variation>
    <location>
        <position position="186"/>
    </location>
</feature>
<feature type="mutagenesis site" description="Complete loss of expression of lytic cycle mRNAs/proteins from the methylated or demethylated form of the viral genome." evidence="10">
    <original>S</original>
    <variation>D</variation>
    <location>
        <position position="186"/>
    </location>
</feature>
<feature type="mutagenesis site" description="Complete loss of induced expression of Rta. Unable to activate BRLF1 or BMRF1 from the viral genome. Impaired synergy with Rta.">
    <original>S</original>
    <variation>G</variation>
    <location>
        <position position="186"/>
    </location>
</feature>
<feature type="mutagenesis site" description="Binds only to the methylated form of the ZRE-2 site. No effect on the activation of the BRLF1 but decreased expression of Rta and BMRF1. Unable to activate BRLF1 expression except if Rta is provided in trans. Reduced ability to disrupt latency. No effect on synergy with Rta." evidence="2 10">
    <original>S</original>
    <variation>T</variation>
    <location>
        <position position="186"/>
    </location>
</feature>
<feature type="mutagenesis site" description="Complete loss of induced expression of Rta. Unable to activate BRLF1 or BMRF1 from the viral genome. Impaired synergy with Rta.">
    <original>S</original>
    <variation>V</variation>
    <location>
        <position position="186"/>
    </location>
</feature>
<feature type="mutagenesis site" description="Complete loss of lytic replication and expression of late gene expression. Reduced capacity to interact with viral DNA and oriLyt." evidence="18">
    <original>R</original>
    <variation>K</variation>
    <location>
        <position position="187"/>
    </location>
</feature>
<feature type="mutagenesis site" description="Complete loss of lytic replication and expression of late gene expression. Reduced capacity to interact with viral DNA and oriLyt." evidence="18">
    <original>K</original>
    <variation>A</variation>
    <location>
        <position position="188"/>
    </location>
</feature>
<feature type="mutagenesis site" description="No effect on homodimerization. Weakened interaction with host CEBPA." evidence="7">
    <original>A</original>
    <variation>D</variation>
    <location>
        <position position="204"/>
    </location>
</feature>
<feature type="mutagenesis site" description="No effect on homodimerization. No effect on the interaction with host CEBPA." evidence="7">
    <original>AA</original>
    <variation>RD</variation>
    <location>
        <begin position="205"/>
        <end position="206"/>
    </location>
</feature>
<feature type="mutagenesis site" description="Complete loss of homodimerization; when associated with R-218." evidence="7">
    <original>L</original>
    <variation>R</variation>
    <location>
        <position position="214"/>
    </location>
</feature>
<feature type="mutagenesis site" description="Complete loss of homodimerization; when associated with R-214." evidence="7">
    <original>L</original>
    <variation>R</variation>
    <location>
        <position position="218"/>
    </location>
</feature>
<feature type="strand" evidence="36">
    <location>
        <begin position="57"/>
        <end position="59"/>
    </location>
</feature>
<feature type="helix" evidence="37">
    <location>
        <begin position="175"/>
        <end position="221"/>
    </location>
</feature>
<feature type="helix" evidence="37">
    <location>
        <begin position="227"/>
        <end position="230"/>
    </location>
</feature>
<accession>P03206</accession>
<accession>Q69127</accession>
<accession>Q777E5</accession>
<organism>
    <name type="scientific">Epstein-Barr virus (strain B95-8)</name>
    <name type="common">HHV-4</name>
    <name type="synonym">Human herpesvirus 4</name>
    <dbReference type="NCBI Taxonomy" id="10377"/>
    <lineage>
        <taxon>Viruses</taxon>
        <taxon>Duplodnaviria</taxon>
        <taxon>Heunggongvirae</taxon>
        <taxon>Peploviricota</taxon>
        <taxon>Herviviricetes</taxon>
        <taxon>Herpesvirales</taxon>
        <taxon>Orthoherpesviridae</taxon>
        <taxon>Gammaherpesvirinae</taxon>
        <taxon>Lymphocryptovirus</taxon>
        <taxon>Lymphocryptovirus humangamma4</taxon>
        <taxon>Epstein-Barr virus (strain GD1)</taxon>
    </lineage>
</organism>
<name>BZLF1_EBVB9</name>
<organismHost>
    <name type="scientific">Homo sapiens</name>
    <name type="common">Human</name>
    <dbReference type="NCBI Taxonomy" id="9606"/>
</organismHost>
<protein>
    <recommendedName>
        <fullName evidence="32">Lytic switch protein BZLF1</fullName>
        <shortName>EB1</shortName>
    </recommendedName>
    <alternativeName>
        <fullName evidence="30">Protein Z</fullName>
    </alternativeName>
    <alternativeName>
        <fullName>Trans-activator protein BZLF1</fullName>
    </alternativeName>
    <alternativeName>
        <fullName evidence="32">Zta</fullName>
    </alternativeName>
    <alternativeName>
        <fullName evidence="32">bZIP transcription factor ZEBRA</fullName>
    </alternativeName>
</protein>
<dbReference type="EMBL" id="V01555">
    <property type="protein sequence ID" value="CAA24861.1"/>
    <property type="molecule type" value="Genomic_DNA"/>
</dbReference>
<dbReference type="EMBL" id="AJ507799">
    <property type="protein sequence ID" value="CAD53423.1"/>
    <property type="molecule type" value="Genomic_DNA"/>
</dbReference>
<dbReference type="EMBL" id="M17547">
    <property type="protein sequence ID" value="AAA66529.1"/>
    <property type="molecule type" value="mRNA"/>
</dbReference>
<dbReference type="RefSeq" id="YP_401673.1">
    <property type="nucleotide sequence ID" value="NC_007605.1"/>
</dbReference>
<dbReference type="PDB" id="1ZSD">
    <property type="method" value="X-ray"/>
    <property type="resolution" value="1.70 A"/>
    <property type="chains" value="C=54-64"/>
</dbReference>
<dbReference type="PDB" id="2AK4">
    <property type="method" value="X-ray"/>
    <property type="resolution" value="2.50 A"/>
    <property type="chains" value="C/H/M/S=52-64"/>
</dbReference>
<dbReference type="PDB" id="2AXF">
    <property type="method" value="X-ray"/>
    <property type="resolution" value="1.80 A"/>
    <property type="chains" value="C=77-86"/>
</dbReference>
<dbReference type="PDB" id="2AXG">
    <property type="method" value="X-ray"/>
    <property type="resolution" value="2.00 A"/>
    <property type="chains" value="C=77-86"/>
</dbReference>
<dbReference type="PDB" id="2C9L">
    <property type="method" value="X-ray"/>
    <property type="resolution" value="2.25 A"/>
    <property type="chains" value="Y/Z=175-236"/>
</dbReference>
<dbReference type="PDB" id="2C9N">
    <property type="method" value="X-ray"/>
    <property type="resolution" value="3.30 A"/>
    <property type="chains" value="Y/Z=175-236"/>
</dbReference>
<dbReference type="PDB" id="2NX5">
    <property type="method" value="X-ray"/>
    <property type="resolution" value="2.70 A"/>
    <property type="chains" value="C/H/M/S=54-64"/>
</dbReference>
<dbReference type="PDB" id="3KWW">
    <property type="method" value="X-ray"/>
    <property type="resolution" value="2.18 A"/>
    <property type="chains" value="C=52-64"/>
</dbReference>
<dbReference type="PDB" id="3KXF">
    <property type="method" value="X-ray"/>
    <property type="resolution" value="3.10 A"/>
    <property type="chains" value="Q/R/S/T=52-64"/>
</dbReference>
<dbReference type="PDB" id="3SPV">
    <property type="method" value="X-ray"/>
    <property type="resolution" value="1.30 A"/>
    <property type="chains" value="C=190-197"/>
</dbReference>
<dbReference type="PDB" id="3VFN">
    <property type="method" value="X-ray"/>
    <property type="resolution" value="1.50 A"/>
    <property type="chains" value="C=52-64"/>
</dbReference>
<dbReference type="PDB" id="3VFO">
    <property type="method" value="X-ray"/>
    <property type="resolution" value="1.70 A"/>
    <property type="chains" value="C=52-64"/>
</dbReference>
<dbReference type="PDB" id="3VFP">
    <property type="method" value="X-ray"/>
    <property type="resolution" value="1.85 A"/>
    <property type="chains" value="C=52-64"/>
</dbReference>
<dbReference type="PDB" id="3VFR">
    <property type="method" value="X-ray"/>
    <property type="resolution" value="1.85 A"/>
    <property type="chains" value="C=52-64"/>
</dbReference>
<dbReference type="PDB" id="5SZX">
    <property type="method" value="X-ray"/>
    <property type="resolution" value="2.25 A"/>
    <property type="chains" value="A/B=175-236"/>
</dbReference>
<dbReference type="PDB" id="7NX5">
    <property type="method" value="X-ray"/>
    <property type="resolution" value="2.50 A"/>
    <property type="chains" value="A/B/E/F=175-236"/>
</dbReference>
<dbReference type="PDBsum" id="1ZSD"/>
<dbReference type="PDBsum" id="2AK4"/>
<dbReference type="PDBsum" id="2AXF"/>
<dbReference type="PDBsum" id="2AXG"/>
<dbReference type="PDBsum" id="2C9L"/>
<dbReference type="PDBsum" id="2C9N"/>
<dbReference type="PDBsum" id="2NX5"/>
<dbReference type="PDBsum" id="3KWW"/>
<dbReference type="PDBsum" id="3KXF"/>
<dbReference type="PDBsum" id="3SPV"/>
<dbReference type="PDBsum" id="3VFN"/>
<dbReference type="PDBsum" id="3VFO"/>
<dbReference type="PDBsum" id="3VFP"/>
<dbReference type="PDBsum" id="3VFR"/>
<dbReference type="PDBsum" id="5SZX"/>
<dbReference type="PDBsum" id="7NX5"/>
<dbReference type="SMR" id="P03206"/>
<dbReference type="BioGRID" id="971786">
    <property type="interactions" value="16"/>
</dbReference>
<dbReference type="IntAct" id="P03206">
    <property type="interactions" value="10"/>
</dbReference>
<dbReference type="MINT" id="P03206"/>
<dbReference type="BindingDB" id="P03206"/>
<dbReference type="ChEMBL" id="CHEMBL1293280"/>
<dbReference type="iPTMnet" id="P03206"/>
<dbReference type="DNASU" id="3783744"/>
<dbReference type="GeneID" id="3783744"/>
<dbReference type="KEGG" id="vg:3783744"/>
<dbReference type="SIGNOR" id="P03206"/>
<dbReference type="EvolutionaryTrace" id="P03206"/>
<dbReference type="PRO" id="PR:P03206"/>
<dbReference type="Proteomes" id="UP000153037">
    <property type="component" value="Segment"/>
</dbReference>
<dbReference type="GO" id="GO:0000785">
    <property type="term" value="C:chromatin"/>
    <property type="evidence" value="ECO:0000314"/>
    <property type="project" value="UniProt"/>
</dbReference>
<dbReference type="GO" id="GO:0042025">
    <property type="term" value="C:host cell nucleus"/>
    <property type="evidence" value="ECO:0007669"/>
    <property type="project" value="UniProtKB-SubCell"/>
</dbReference>
<dbReference type="GO" id="GO:0003677">
    <property type="term" value="F:DNA binding"/>
    <property type="evidence" value="ECO:0000314"/>
    <property type="project" value="UniProtKB"/>
</dbReference>
<dbReference type="GO" id="GO:0003700">
    <property type="term" value="F:DNA-binding transcription factor activity"/>
    <property type="evidence" value="ECO:0000314"/>
    <property type="project" value="UniProt"/>
</dbReference>
<dbReference type="GO" id="GO:0046983">
    <property type="term" value="F:protein dimerization activity"/>
    <property type="evidence" value="ECO:0000314"/>
    <property type="project" value="UniProtKB"/>
</dbReference>
<dbReference type="GO" id="GO:0043565">
    <property type="term" value="F:sequence-specific DNA binding"/>
    <property type="evidence" value="ECO:0000314"/>
    <property type="project" value="UniProtKB"/>
</dbReference>
<dbReference type="GO" id="GO:0045893">
    <property type="term" value="P:positive regulation of DNA-templated transcription"/>
    <property type="evidence" value="ECO:0000314"/>
    <property type="project" value="CACAO"/>
</dbReference>
<dbReference type="GO" id="GO:0006355">
    <property type="term" value="P:regulation of DNA-templated transcription"/>
    <property type="evidence" value="ECO:0000314"/>
    <property type="project" value="UniProtKB"/>
</dbReference>
<dbReference type="GO" id="GO:0019046">
    <property type="term" value="P:release from viral latency"/>
    <property type="evidence" value="ECO:0000314"/>
    <property type="project" value="UniProt"/>
</dbReference>
<dbReference type="GO" id="GO:0039646">
    <property type="term" value="P:symbiont-mediated perturbation of host cell cycle G0/G1 transition checkpoint"/>
    <property type="evidence" value="ECO:0007669"/>
    <property type="project" value="UniProtKB-KW"/>
</dbReference>
<dbReference type="GO" id="GO:0039645">
    <property type="term" value="P:symbiont-mediated perturbation of host cell cycle G1/S transition checkpoint"/>
    <property type="evidence" value="ECO:0007669"/>
    <property type="project" value="UniProtKB-KW"/>
</dbReference>
<dbReference type="GO" id="GO:0039557">
    <property type="term" value="P:symbiont-mediated suppression of host cytoplasmic pattern recognition receptor signaling pathway via inhibition of IRF7 activity"/>
    <property type="evidence" value="ECO:0007669"/>
    <property type="project" value="UniProtKB-KW"/>
</dbReference>
<dbReference type="GO" id="GO:0141072">
    <property type="term" value="P:symbiont-mediated suppression of host tumor necrosis factor-mediated signaling pathway"/>
    <property type="evidence" value="ECO:0000269"/>
    <property type="project" value="SigSci"/>
</dbReference>
<dbReference type="CDD" id="cd14809">
    <property type="entry name" value="bZIP_AUREO-like"/>
    <property type="match status" value="1"/>
</dbReference>
<dbReference type="Gene3D" id="1.20.5.170">
    <property type="match status" value="1"/>
</dbReference>
<dbReference type="InterPro" id="IPR004827">
    <property type="entry name" value="bZIP"/>
</dbReference>
<dbReference type="InterPro" id="IPR046347">
    <property type="entry name" value="bZIP_sf"/>
</dbReference>
<dbReference type="InterPro" id="IPR017339">
    <property type="entry name" value="BZLF1_HHV-4"/>
</dbReference>
<dbReference type="PIRSF" id="PIRSF037966">
    <property type="entry name" value="BZLF1"/>
    <property type="match status" value="1"/>
</dbReference>
<dbReference type="SUPFAM" id="SSF57959">
    <property type="entry name" value="Leucine zipper domain"/>
    <property type="match status" value="1"/>
</dbReference>
<dbReference type="PROSITE" id="PS00036">
    <property type="entry name" value="BZIP_BASIC"/>
    <property type="match status" value="1"/>
</dbReference>
<comment type="function">
    <text evidence="5 7 9 12 13 14 16 18 19 20 21 23 25 27 34">Transcription factor that acts as a molecular switch to induce the transition from the latent to the lytic or productive phase of the virus cycle (Probable) (PubMed:8404860). Mediates the switch from the latent to the lytic cycle of infection in cells containing a highly methylated viral genome (PubMed:15361873, PubMed:34893887). Probably binds to silenced chromatin and recruits host chromatin-remodeling enzymes (PubMed:30926617). Regulates this switch by binding to 2 types of ZEBRA response elements (ZREs): the CpG-free AP-1 like elements (latency) and the methylated CpG-containing elements (lytic replication) (Probable) (PubMed:22022468, PubMed:34893887). Activates preferentially the methylated forms of the viral lytic R (BRLF1) and Na (BRRF1) gene promoters, the latters being the first genes activated during Z-mediated reactivation in latently infected cells (PubMed:15361873, PubMed:19325883). BZLF1 and BRLF1 act together to trigger lytic replication (PubMed:10856251, PubMed:15361873). Also binds the lytic origin of replication, oriLyt (PubMed:20808903). Induces G1 cell cycle arrest by stabilizing the host CCAAT/enhancer binding protein CEBPA (PubMed:15078966). This function is important because the lytic cycle preferentially takes place in host cells arrested in G1 (PubMed:15078966).</text>
</comment>
<comment type="subunit">
    <text evidence="3 4 6 7 15 17 21 22 23 24 28">Homodimer (PubMed:11333921, PubMed:15078966, PubMed:28158710). Interacts (via b-ZIP domain) with the DNA polymerase processivity factor BMRF1 (via N-terminus); this interaction may inhibit BZLF1-induced transcription of the BMRF1 promoter (PubMed:8764021). Interacts with human UBN1, CRTC2 and RACK1 (PubMed:10725330, PubMed:10849009, PubMed:19164291). Interacts (via N-terminus) with human PAX5 (via N-terminus); this interaction inhibits BZLF1-mediated lytic viral reactivation (PubMed:23678172). Interacts (via leucine-zipper domain) with host CEBPA; this interaction induces G1 host cell cycle arrest (PubMed:15078966). Interacts (via C-terminus) with host TP53BP1 (via C-terminus); this interaction is involved in the activation of the viral lytic cycle (PubMed:19656881). Interacts with host chromatin-remodeling ATPase INO80; this interaction participates to the activation of early lytic viral genes by BZLF1 (PubMed:30926617). Interacts with host regulator of chromatin SMARCA5/hSNF2H; this interaction participates to the activation of early lytic viral genes by BZLF1 (PubMed:30926617). Interacts with host PLSCR1/Phospholipid scramblase 1; this interaction negatively regulates the transcriptional regulatory activity of BZLF1 by preventing the formation of the BZLF1-CBP complex (PubMed:31434743).</text>
</comment>
<comment type="interaction">
    <interactant intactId="EBI-2621186">
        <id>P03206</id>
    </interactant>
    <interactant intactId="EBI-1181987">
        <id>Q53ET0</id>
        <label>CRTC2</label>
    </interactant>
    <organismsDiffer>true</organismsDiffer>
    <experiments>3</experiments>
</comment>
<comment type="interaction">
    <interactant intactId="EBI-2621186">
        <id>P03206</id>
    </interactant>
    <interactant intactId="EBI-296739">
        <id>P63244</id>
        <label>RACK1</label>
    </interactant>
    <organismsDiffer>true</organismsDiffer>
    <experiments>5</experiments>
</comment>
<comment type="subcellular location">
    <subcellularLocation>
        <location evidence="4 26">Host nucleus</location>
    </subcellularLocation>
</comment>
<comment type="induction">
    <text evidence="12 16 20">Expressed in the immediate-early phase of the viral replicative cycle (PubMed:17079287). It is expressed again during the switch between latency and lytic replication (PubMed:22022468). BRLF1/RTA and BRRF1 cooperatively activate transcription of the Z promoter and thereby establish a positive autoregulatory loop (PubMed:19325883).</text>
</comment>
<comment type="domain">
    <text evidence="6 7 11 25">Recognizes the CpG methylation marks through a specific serine and a methylcytosine-arginine-guanine triad (PubMed:34893887). The leucine zipper region contributes to homodimerization (PubMed:11333921, PubMed:15078966). The basic motif is involved in specific DNA-binding (PubMed:16321978).</text>
</comment>
<comment type="similarity">
    <text evidence="33">Belongs to the bZIP family.</text>
</comment>